<keyword id="KW-0028">Amino-acid biosynthesis</keyword>
<keyword id="KW-0057">Aromatic amino acid biosynthesis</keyword>
<keyword id="KW-0328">Glycosyltransferase</keyword>
<keyword id="KW-0460">Magnesium</keyword>
<keyword id="KW-0479">Metal-binding</keyword>
<keyword id="KW-1185">Reference proteome</keyword>
<keyword id="KW-0808">Transferase</keyword>
<keyword id="KW-0822">Tryptophan biosynthesis</keyword>
<evidence type="ECO:0000255" key="1">
    <source>
        <dbReference type="HAMAP-Rule" id="MF_00211"/>
    </source>
</evidence>
<gene>
    <name evidence="1" type="primary">trpD</name>
    <name type="ordered locus">BC_1234</name>
</gene>
<feature type="chain" id="PRO_0000154425" description="Anthranilate phosphoribosyltransferase">
    <location>
        <begin position="1"/>
        <end position="341"/>
    </location>
</feature>
<feature type="binding site" evidence="1">
    <location>
        <position position="79"/>
    </location>
    <ligand>
        <name>5-phospho-alpha-D-ribose 1-diphosphate</name>
        <dbReference type="ChEBI" id="CHEBI:58017"/>
    </ligand>
</feature>
<feature type="binding site" evidence="1">
    <location>
        <position position="79"/>
    </location>
    <ligand>
        <name>anthranilate</name>
        <dbReference type="ChEBI" id="CHEBI:16567"/>
        <label>1</label>
    </ligand>
</feature>
<feature type="binding site" evidence="1">
    <location>
        <begin position="82"/>
        <end position="83"/>
    </location>
    <ligand>
        <name>5-phospho-alpha-D-ribose 1-diphosphate</name>
        <dbReference type="ChEBI" id="CHEBI:58017"/>
    </ligand>
</feature>
<feature type="binding site" evidence="1">
    <location>
        <position position="87"/>
    </location>
    <ligand>
        <name>5-phospho-alpha-D-ribose 1-diphosphate</name>
        <dbReference type="ChEBI" id="CHEBI:58017"/>
    </ligand>
</feature>
<feature type="binding site" evidence="1">
    <location>
        <begin position="89"/>
        <end position="92"/>
    </location>
    <ligand>
        <name>5-phospho-alpha-D-ribose 1-diphosphate</name>
        <dbReference type="ChEBI" id="CHEBI:58017"/>
    </ligand>
</feature>
<feature type="binding site" evidence="1">
    <location>
        <position position="91"/>
    </location>
    <ligand>
        <name>Mg(2+)</name>
        <dbReference type="ChEBI" id="CHEBI:18420"/>
        <label>1</label>
    </ligand>
</feature>
<feature type="binding site" evidence="1">
    <location>
        <begin position="107"/>
        <end position="115"/>
    </location>
    <ligand>
        <name>5-phospho-alpha-D-ribose 1-diphosphate</name>
        <dbReference type="ChEBI" id="CHEBI:58017"/>
    </ligand>
</feature>
<feature type="binding site" evidence="1">
    <location>
        <position position="110"/>
    </location>
    <ligand>
        <name>anthranilate</name>
        <dbReference type="ChEBI" id="CHEBI:16567"/>
        <label>1</label>
    </ligand>
</feature>
<feature type="binding site" evidence="1">
    <location>
        <position position="119"/>
    </location>
    <ligand>
        <name>5-phospho-alpha-D-ribose 1-diphosphate</name>
        <dbReference type="ChEBI" id="CHEBI:58017"/>
    </ligand>
</feature>
<feature type="binding site" evidence="1">
    <location>
        <position position="165"/>
    </location>
    <ligand>
        <name>anthranilate</name>
        <dbReference type="ChEBI" id="CHEBI:16567"/>
        <label>2</label>
    </ligand>
</feature>
<feature type="binding site" evidence="1">
    <location>
        <position position="224"/>
    </location>
    <ligand>
        <name>Mg(2+)</name>
        <dbReference type="ChEBI" id="CHEBI:18420"/>
        <label>2</label>
    </ligand>
</feature>
<feature type="binding site" evidence="1">
    <location>
        <position position="225"/>
    </location>
    <ligand>
        <name>Mg(2+)</name>
        <dbReference type="ChEBI" id="CHEBI:18420"/>
        <label>1</label>
    </ligand>
</feature>
<feature type="binding site" evidence="1">
    <location>
        <position position="225"/>
    </location>
    <ligand>
        <name>Mg(2+)</name>
        <dbReference type="ChEBI" id="CHEBI:18420"/>
        <label>2</label>
    </ligand>
</feature>
<name>TRPD_BACCR</name>
<protein>
    <recommendedName>
        <fullName evidence="1">Anthranilate phosphoribosyltransferase</fullName>
        <ecNumber evidence="1">2.4.2.18</ecNumber>
    </recommendedName>
</protein>
<comment type="function">
    <text evidence="1">Catalyzes the transfer of the phosphoribosyl group of 5-phosphorylribose-1-pyrophosphate (PRPP) to anthranilate to yield N-(5'-phosphoribosyl)-anthranilate (PRA).</text>
</comment>
<comment type="catalytic activity">
    <reaction evidence="1">
        <text>N-(5-phospho-beta-D-ribosyl)anthranilate + diphosphate = 5-phospho-alpha-D-ribose 1-diphosphate + anthranilate</text>
        <dbReference type="Rhea" id="RHEA:11768"/>
        <dbReference type="ChEBI" id="CHEBI:16567"/>
        <dbReference type="ChEBI" id="CHEBI:18277"/>
        <dbReference type="ChEBI" id="CHEBI:33019"/>
        <dbReference type="ChEBI" id="CHEBI:58017"/>
        <dbReference type="EC" id="2.4.2.18"/>
    </reaction>
</comment>
<comment type="cofactor">
    <cofactor evidence="1">
        <name>Mg(2+)</name>
        <dbReference type="ChEBI" id="CHEBI:18420"/>
    </cofactor>
    <text evidence="1">Binds 2 magnesium ions per monomer.</text>
</comment>
<comment type="pathway">
    <text evidence="1">Amino-acid biosynthesis; L-tryptophan biosynthesis; L-tryptophan from chorismate: step 2/5.</text>
</comment>
<comment type="subunit">
    <text evidence="1">Homodimer.</text>
</comment>
<comment type="similarity">
    <text evidence="1">Belongs to the anthranilate phosphoribosyltransferase family.</text>
</comment>
<reference key="1">
    <citation type="journal article" date="2003" name="Nature">
        <title>Genome sequence of Bacillus cereus and comparative analysis with Bacillus anthracis.</title>
        <authorList>
            <person name="Ivanova N."/>
            <person name="Sorokin A."/>
            <person name="Anderson I."/>
            <person name="Galleron N."/>
            <person name="Candelon B."/>
            <person name="Kapatral V."/>
            <person name="Bhattacharyya A."/>
            <person name="Reznik G."/>
            <person name="Mikhailova N."/>
            <person name="Lapidus A."/>
            <person name="Chu L."/>
            <person name="Mazur M."/>
            <person name="Goltsman E."/>
            <person name="Larsen N."/>
            <person name="D'Souza M."/>
            <person name="Walunas T."/>
            <person name="Grechkin Y."/>
            <person name="Pusch G."/>
            <person name="Haselkorn R."/>
            <person name="Fonstein M."/>
            <person name="Ehrlich S.D."/>
            <person name="Overbeek R."/>
            <person name="Kyrpides N.C."/>
        </authorList>
    </citation>
    <scope>NUCLEOTIDE SEQUENCE [LARGE SCALE GENOMIC DNA]</scope>
    <source>
        <strain>ATCC 14579 / DSM 31 / CCUG 7414 / JCM 2152 / NBRC 15305 / NCIMB 9373 / NCTC 2599 / NRRL B-3711</strain>
    </source>
</reference>
<sequence length="341" mass="37023">MNSYLRKLVEGKHLTEEEMYRAGLLLLNENILESEIAAFLVLLKAKGETAEEIYGLVRALREKALPFSNHIQGAMDNCGTGGDGAQTFNISTTSAFVLAGAGVKVAKHGNRAVSSKTGSADLLEELGVNISSTPSEIDYLLEHVGIAFLFAPAMHPALTRIMKIRKELNVPTIFNLIGPLTNPVNLETQFVGIYKRDMLLPVAQVLQKLGRKQALVVNGSGFLDEASLQGENHVVILKDNEIVEMSIDPEKYGFSRVKNEEIRGGNSKENAKITLEVLSGEKSVYRDTVLLNAGLALFANGKTETIEEGIKLAAHSIDSGKALAKLNLLIVASNEKLERVN</sequence>
<proteinExistence type="inferred from homology"/>
<accession>Q81GG8</accession>
<organism>
    <name type="scientific">Bacillus cereus (strain ATCC 14579 / DSM 31 / CCUG 7414 / JCM 2152 / NBRC 15305 / NCIMB 9373 / NCTC 2599 / NRRL B-3711)</name>
    <dbReference type="NCBI Taxonomy" id="226900"/>
    <lineage>
        <taxon>Bacteria</taxon>
        <taxon>Bacillati</taxon>
        <taxon>Bacillota</taxon>
        <taxon>Bacilli</taxon>
        <taxon>Bacillales</taxon>
        <taxon>Bacillaceae</taxon>
        <taxon>Bacillus</taxon>
        <taxon>Bacillus cereus group</taxon>
    </lineage>
</organism>
<dbReference type="EC" id="2.4.2.18" evidence="1"/>
<dbReference type="EMBL" id="AE016877">
    <property type="protein sequence ID" value="AAP08219.1"/>
    <property type="molecule type" value="Genomic_DNA"/>
</dbReference>
<dbReference type="RefSeq" id="NP_831018.1">
    <property type="nucleotide sequence ID" value="NC_004722.1"/>
</dbReference>
<dbReference type="RefSeq" id="WP_001089853.1">
    <property type="nucleotide sequence ID" value="NZ_CP138336.1"/>
</dbReference>
<dbReference type="SMR" id="Q81GG8"/>
<dbReference type="STRING" id="226900.BC_1234"/>
<dbReference type="MetOSite" id="Q81GG8"/>
<dbReference type="KEGG" id="bce:BC1234"/>
<dbReference type="PATRIC" id="fig|226900.8.peg.1205"/>
<dbReference type="HOGENOM" id="CLU_034315_2_1_9"/>
<dbReference type="OrthoDB" id="9806430at2"/>
<dbReference type="UniPathway" id="UPA00035">
    <property type="reaction ID" value="UER00041"/>
</dbReference>
<dbReference type="Proteomes" id="UP000001417">
    <property type="component" value="Chromosome"/>
</dbReference>
<dbReference type="GO" id="GO:0005829">
    <property type="term" value="C:cytosol"/>
    <property type="evidence" value="ECO:0000318"/>
    <property type="project" value="GO_Central"/>
</dbReference>
<dbReference type="GO" id="GO:0004048">
    <property type="term" value="F:anthranilate phosphoribosyltransferase activity"/>
    <property type="evidence" value="ECO:0007669"/>
    <property type="project" value="UniProtKB-UniRule"/>
</dbReference>
<dbReference type="GO" id="GO:0000287">
    <property type="term" value="F:magnesium ion binding"/>
    <property type="evidence" value="ECO:0007669"/>
    <property type="project" value="UniProtKB-UniRule"/>
</dbReference>
<dbReference type="GO" id="GO:0000162">
    <property type="term" value="P:L-tryptophan biosynthetic process"/>
    <property type="evidence" value="ECO:0000318"/>
    <property type="project" value="GO_Central"/>
</dbReference>
<dbReference type="FunFam" id="3.40.1030.10:FF:000002">
    <property type="entry name" value="Anthranilate phosphoribosyltransferase"/>
    <property type="match status" value="1"/>
</dbReference>
<dbReference type="Gene3D" id="3.40.1030.10">
    <property type="entry name" value="Nucleoside phosphorylase/phosphoribosyltransferase catalytic domain"/>
    <property type="match status" value="1"/>
</dbReference>
<dbReference type="Gene3D" id="1.20.970.10">
    <property type="entry name" value="Transferase, Pyrimidine Nucleoside Phosphorylase, Chain C"/>
    <property type="match status" value="1"/>
</dbReference>
<dbReference type="HAMAP" id="MF_00211">
    <property type="entry name" value="TrpD"/>
    <property type="match status" value="1"/>
</dbReference>
<dbReference type="InterPro" id="IPR005940">
    <property type="entry name" value="Anthranilate_Pribosyl_Tfrase"/>
</dbReference>
<dbReference type="InterPro" id="IPR000312">
    <property type="entry name" value="Glycosyl_Trfase_fam3"/>
</dbReference>
<dbReference type="InterPro" id="IPR017459">
    <property type="entry name" value="Glycosyl_Trfase_fam3_N_dom"/>
</dbReference>
<dbReference type="InterPro" id="IPR036320">
    <property type="entry name" value="Glycosyl_Trfase_fam3_N_dom_sf"/>
</dbReference>
<dbReference type="InterPro" id="IPR035902">
    <property type="entry name" value="Nuc_phospho_transferase"/>
</dbReference>
<dbReference type="NCBIfam" id="TIGR01245">
    <property type="entry name" value="trpD"/>
    <property type="match status" value="1"/>
</dbReference>
<dbReference type="PANTHER" id="PTHR43285">
    <property type="entry name" value="ANTHRANILATE PHOSPHORIBOSYLTRANSFERASE"/>
    <property type="match status" value="1"/>
</dbReference>
<dbReference type="PANTHER" id="PTHR43285:SF2">
    <property type="entry name" value="ANTHRANILATE PHOSPHORIBOSYLTRANSFERASE"/>
    <property type="match status" value="1"/>
</dbReference>
<dbReference type="Pfam" id="PF02885">
    <property type="entry name" value="Glycos_trans_3N"/>
    <property type="match status" value="1"/>
</dbReference>
<dbReference type="Pfam" id="PF00591">
    <property type="entry name" value="Glycos_transf_3"/>
    <property type="match status" value="1"/>
</dbReference>
<dbReference type="SUPFAM" id="SSF52418">
    <property type="entry name" value="Nucleoside phosphorylase/phosphoribosyltransferase catalytic domain"/>
    <property type="match status" value="1"/>
</dbReference>
<dbReference type="SUPFAM" id="SSF47648">
    <property type="entry name" value="Nucleoside phosphorylase/phosphoribosyltransferase N-terminal domain"/>
    <property type="match status" value="1"/>
</dbReference>